<organism>
    <name type="scientific">Photorhabdus luminescens</name>
    <name type="common">Xenorhabdus luminescens</name>
    <dbReference type="NCBI Taxonomy" id="29488"/>
    <lineage>
        <taxon>Bacteria</taxon>
        <taxon>Pseudomonadati</taxon>
        <taxon>Pseudomonadota</taxon>
        <taxon>Gammaproteobacteria</taxon>
        <taxon>Enterobacterales</taxon>
        <taxon>Morganellaceae</taxon>
        <taxon>Photorhabdus</taxon>
    </lineage>
</organism>
<name>PNP_PHOLU</name>
<protein>
    <recommendedName>
        <fullName evidence="1">Polyribonucleotide nucleotidyltransferase</fullName>
        <ecNumber evidence="1">2.7.7.8</ecNumber>
    </recommendedName>
    <alternativeName>
        <fullName evidence="1">Polynucleotide phosphorylase</fullName>
        <shortName evidence="1">PNPase</shortName>
    </alternativeName>
</protein>
<evidence type="ECO:0000255" key="1">
    <source>
        <dbReference type="HAMAP-Rule" id="MF_01595"/>
    </source>
</evidence>
<reference key="1">
    <citation type="journal article" date="1994" name="J. Bacteriol.">
        <title>The gene coding for polynucleotide phosphorylase in Photorhabdus sp. strain K122 is induced at low temperatures.</title>
        <authorList>
            <person name="Clarke D.J."/>
            <person name="Dowds B.C.A."/>
        </authorList>
    </citation>
    <scope>NUCLEOTIDE SEQUENCE [GENOMIC DNA]</scope>
    <scope>PROTEIN SEQUENCE OF 1-13</scope>
    <source>
        <strain>K122</strain>
    </source>
</reference>
<comment type="function">
    <text evidence="1">Involved in mRNA degradation. Catalyzes the phosphorolysis of single-stranded polyribonucleotides processively in the 3'- to 5'-direction.</text>
</comment>
<comment type="catalytic activity">
    <reaction evidence="1">
        <text>RNA(n+1) + phosphate = RNA(n) + a ribonucleoside 5'-diphosphate</text>
        <dbReference type="Rhea" id="RHEA:22096"/>
        <dbReference type="Rhea" id="RHEA-COMP:14527"/>
        <dbReference type="Rhea" id="RHEA-COMP:17342"/>
        <dbReference type="ChEBI" id="CHEBI:43474"/>
        <dbReference type="ChEBI" id="CHEBI:57930"/>
        <dbReference type="ChEBI" id="CHEBI:140395"/>
        <dbReference type="EC" id="2.7.7.8"/>
    </reaction>
</comment>
<comment type="cofactor">
    <cofactor evidence="1">
        <name>Mg(2+)</name>
        <dbReference type="ChEBI" id="CHEBI:18420"/>
    </cofactor>
</comment>
<comment type="subunit">
    <text evidence="1">Component of the RNA degradosome, which is a multiprotein complex involved in RNA processing and mRNA degradation.</text>
</comment>
<comment type="subcellular location">
    <subcellularLocation>
        <location>Cytoplasm</location>
    </subcellularLocation>
</comment>
<comment type="induction">
    <text>In response to low temperature.</text>
</comment>
<comment type="similarity">
    <text evidence="1">Belongs to the polyribonucleotide nucleotidyltransferase family.</text>
</comment>
<dbReference type="EC" id="2.7.7.8" evidence="1"/>
<dbReference type="EMBL" id="X76069">
    <property type="protein sequence ID" value="CAA53671.1"/>
    <property type="molecule type" value="Genomic_DNA"/>
</dbReference>
<dbReference type="PIR" id="S38883">
    <property type="entry name" value="S38883"/>
</dbReference>
<dbReference type="SMR" id="P41121"/>
<dbReference type="STRING" id="29488.KS18_11530"/>
<dbReference type="GO" id="GO:0005829">
    <property type="term" value="C:cytosol"/>
    <property type="evidence" value="ECO:0007669"/>
    <property type="project" value="TreeGrafter"/>
</dbReference>
<dbReference type="GO" id="GO:0000175">
    <property type="term" value="F:3'-5'-RNA exonuclease activity"/>
    <property type="evidence" value="ECO:0007669"/>
    <property type="project" value="TreeGrafter"/>
</dbReference>
<dbReference type="GO" id="GO:0000287">
    <property type="term" value="F:magnesium ion binding"/>
    <property type="evidence" value="ECO:0007669"/>
    <property type="project" value="UniProtKB-UniRule"/>
</dbReference>
<dbReference type="GO" id="GO:0004654">
    <property type="term" value="F:polyribonucleotide nucleotidyltransferase activity"/>
    <property type="evidence" value="ECO:0007669"/>
    <property type="project" value="UniProtKB-UniRule"/>
</dbReference>
<dbReference type="GO" id="GO:0003723">
    <property type="term" value="F:RNA binding"/>
    <property type="evidence" value="ECO:0007669"/>
    <property type="project" value="UniProtKB-UniRule"/>
</dbReference>
<dbReference type="GO" id="GO:0006402">
    <property type="term" value="P:mRNA catabolic process"/>
    <property type="evidence" value="ECO:0007669"/>
    <property type="project" value="UniProtKB-UniRule"/>
</dbReference>
<dbReference type="GO" id="GO:0006396">
    <property type="term" value="P:RNA processing"/>
    <property type="evidence" value="ECO:0007669"/>
    <property type="project" value="InterPro"/>
</dbReference>
<dbReference type="CDD" id="cd02393">
    <property type="entry name" value="KH-I_PNPase"/>
    <property type="match status" value="1"/>
</dbReference>
<dbReference type="CDD" id="cd11363">
    <property type="entry name" value="RNase_PH_PNPase_1"/>
    <property type="match status" value="1"/>
</dbReference>
<dbReference type="CDD" id="cd11364">
    <property type="entry name" value="RNase_PH_PNPase_2"/>
    <property type="match status" value="1"/>
</dbReference>
<dbReference type="CDD" id="cd04472">
    <property type="entry name" value="S1_PNPase"/>
    <property type="match status" value="1"/>
</dbReference>
<dbReference type="FunFam" id="2.40.50.140:FF:000023">
    <property type="entry name" value="Polyribonucleotide nucleotidyltransferase"/>
    <property type="match status" value="1"/>
</dbReference>
<dbReference type="FunFam" id="3.30.1370.10:FF:000001">
    <property type="entry name" value="Polyribonucleotide nucleotidyltransferase"/>
    <property type="match status" value="1"/>
</dbReference>
<dbReference type="FunFam" id="3.30.230.70:FF:000001">
    <property type="entry name" value="Polyribonucleotide nucleotidyltransferase"/>
    <property type="match status" value="1"/>
</dbReference>
<dbReference type="FunFam" id="3.30.230.70:FF:000002">
    <property type="entry name" value="Polyribonucleotide nucleotidyltransferase"/>
    <property type="match status" value="1"/>
</dbReference>
<dbReference type="Gene3D" id="3.30.230.70">
    <property type="entry name" value="GHMP Kinase, N-terminal domain"/>
    <property type="match status" value="2"/>
</dbReference>
<dbReference type="Gene3D" id="3.30.1370.10">
    <property type="entry name" value="K Homology domain, type 1"/>
    <property type="match status" value="1"/>
</dbReference>
<dbReference type="Gene3D" id="2.40.50.140">
    <property type="entry name" value="Nucleic acid-binding proteins"/>
    <property type="match status" value="1"/>
</dbReference>
<dbReference type="HAMAP" id="MF_01595">
    <property type="entry name" value="PNPase"/>
    <property type="match status" value="1"/>
</dbReference>
<dbReference type="InterPro" id="IPR001247">
    <property type="entry name" value="ExoRNase_PH_dom1"/>
</dbReference>
<dbReference type="InterPro" id="IPR015847">
    <property type="entry name" value="ExoRNase_PH_dom2"/>
</dbReference>
<dbReference type="InterPro" id="IPR036345">
    <property type="entry name" value="ExoRNase_PH_dom2_sf"/>
</dbReference>
<dbReference type="InterPro" id="IPR004087">
    <property type="entry name" value="KH_dom"/>
</dbReference>
<dbReference type="InterPro" id="IPR004088">
    <property type="entry name" value="KH_dom_type_1"/>
</dbReference>
<dbReference type="InterPro" id="IPR036612">
    <property type="entry name" value="KH_dom_type_1_sf"/>
</dbReference>
<dbReference type="InterPro" id="IPR012340">
    <property type="entry name" value="NA-bd_OB-fold"/>
</dbReference>
<dbReference type="InterPro" id="IPR012162">
    <property type="entry name" value="PNPase"/>
</dbReference>
<dbReference type="InterPro" id="IPR027408">
    <property type="entry name" value="PNPase/RNase_PH_dom_sf"/>
</dbReference>
<dbReference type="InterPro" id="IPR015848">
    <property type="entry name" value="PNPase_PH_RNA-bd_bac/org-type"/>
</dbReference>
<dbReference type="InterPro" id="IPR036456">
    <property type="entry name" value="PNPase_PH_RNA-bd_sf"/>
</dbReference>
<dbReference type="InterPro" id="IPR020568">
    <property type="entry name" value="Ribosomal_Su5_D2-typ_SF"/>
</dbReference>
<dbReference type="InterPro" id="IPR003029">
    <property type="entry name" value="S1_domain"/>
</dbReference>
<dbReference type="NCBIfam" id="TIGR03591">
    <property type="entry name" value="polynuc_phos"/>
    <property type="match status" value="1"/>
</dbReference>
<dbReference type="NCBIfam" id="NF008805">
    <property type="entry name" value="PRK11824.1"/>
    <property type="match status" value="1"/>
</dbReference>
<dbReference type="PANTHER" id="PTHR11252">
    <property type="entry name" value="POLYRIBONUCLEOTIDE NUCLEOTIDYLTRANSFERASE"/>
    <property type="match status" value="1"/>
</dbReference>
<dbReference type="PANTHER" id="PTHR11252:SF0">
    <property type="entry name" value="POLYRIBONUCLEOTIDE NUCLEOTIDYLTRANSFERASE 1, MITOCHONDRIAL"/>
    <property type="match status" value="1"/>
</dbReference>
<dbReference type="Pfam" id="PF00013">
    <property type="entry name" value="KH_1"/>
    <property type="match status" value="1"/>
</dbReference>
<dbReference type="Pfam" id="PF03726">
    <property type="entry name" value="PNPase"/>
    <property type="match status" value="1"/>
</dbReference>
<dbReference type="Pfam" id="PF01138">
    <property type="entry name" value="RNase_PH"/>
    <property type="match status" value="2"/>
</dbReference>
<dbReference type="Pfam" id="PF03725">
    <property type="entry name" value="RNase_PH_C"/>
    <property type="match status" value="1"/>
</dbReference>
<dbReference type="Pfam" id="PF00575">
    <property type="entry name" value="S1"/>
    <property type="match status" value="1"/>
</dbReference>
<dbReference type="PIRSF" id="PIRSF005499">
    <property type="entry name" value="PNPase"/>
    <property type="match status" value="1"/>
</dbReference>
<dbReference type="SMART" id="SM00322">
    <property type="entry name" value="KH"/>
    <property type="match status" value="1"/>
</dbReference>
<dbReference type="SMART" id="SM00316">
    <property type="entry name" value="S1"/>
    <property type="match status" value="1"/>
</dbReference>
<dbReference type="SUPFAM" id="SSF54791">
    <property type="entry name" value="Eukaryotic type KH-domain (KH-domain type I)"/>
    <property type="match status" value="1"/>
</dbReference>
<dbReference type="SUPFAM" id="SSF50249">
    <property type="entry name" value="Nucleic acid-binding proteins"/>
    <property type="match status" value="1"/>
</dbReference>
<dbReference type="SUPFAM" id="SSF46915">
    <property type="entry name" value="Polynucleotide phosphorylase/guanosine pentaphosphate synthase (PNPase/GPSI), domain 3"/>
    <property type="match status" value="1"/>
</dbReference>
<dbReference type="SUPFAM" id="SSF55666">
    <property type="entry name" value="Ribonuclease PH domain 2-like"/>
    <property type="match status" value="2"/>
</dbReference>
<dbReference type="SUPFAM" id="SSF54211">
    <property type="entry name" value="Ribosomal protein S5 domain 2-like"/>
    <property type="match status" value="2"/>
</dbReference>
<dbReference type="PROSITE" id="PS50084">
    <property type="entry name" value="KH_TYPE_1"/>
    <property type="match status" value="1"/>
</dbReference>
<dbReference type="PROSITE" id="PS50126">
    <property type="entry name" value="S1"/>
    <property type="match status" value="1"/>
</dbReference>
<keyword id="KW-0963">Cytoplasm</keyword>
<keyword id="KW-0903">Direct protein sequencing</keyword>
<keyword id="KW-0460">Magnesium</keyword>
<keyword id="KW-0479">Metal-binding</keyword>
<keyword id="KW-0548">Nucleotidyltransferase</keyword>
<keyword id="KW-0694">RNA-binding</keyword>
<keyword id="KW-0346">Stress response</keyword>
<keyword id="KW-0808">Transferase</keyword>
<proteinExistence type="evidence at protein level"/>
<feature type="chain" id="PRO_0000197915" description="Polyribonucleotide nucleotidyltransferase">
    <location>
        <begin position="1"/>
        <end position="709"/>
    </location>
</feature>
<feature type="domain" description="KH" evidence="1">
    <location>
        <begin position="553"/>
        <end position="612"/>
    </location>
</feature>
<feature type="domain" description="S1 motif" evidence="1">
    <location>
        <begin position="622"/>
        <end position="690"/>
    </location>
</feature>
<feature type="binding site" evidence="1">
    <location>
        <position position="486"/>
    </location>
    <ligand>
        <name>Mg(2+)</name>
        <dbReference type="ChEBI" id="CHEBI:18420"/>
    </ligand>
</feature>
<feature type="binding site" evidence="1">
    <location>
        <position position="492"/>
    </location>
    <ligand>
        <name>Mg(2+)</name>
        <dbReference type="ChEBI" id="CHEBI:18420"/>
    </ligand>
</feature>
<gene>
    <name evidence="1" type="primary">pnp</name>
    <name type="synonym">pph</name>
</gene>
<sequence>MLNPIVRKFQYGQHTVTIETGMMARQATAAVMVNMDDTAVFVTVVGQKKVKAGQDFFPLTVNYQERTYAAGRIPGSFFRREGRPGEGETLVARLIDRPLRPLFPEGFLNEVRIVATVVSVNPQINPDIVAMIGASAALALSGIPFNGPIGAARVGYINDQYVLNPTSDELKNSRLDLVVSGTAGAVLMVESEADLLTEEQMLGAVVFGHDQQQVVIDNINALAAEAGKEKWDWVPEPVNQALHDRVAELAESRLGDAYRITEKQERYAQVDAIKDEVTAALLEQDETLEEAEIHEILGSLEKNVVRSRVLSGEPRIDGREKDMVRALDVRTGVLPRTHGSALFTRGETQALVTATLGTERDAQIIDELMGERTDRFLLHYNFPPYSVGETGMMGSPKRREIGHGRLAKRGVLAVMPKANEFPYTVRVVSEITESNGSSSMASVCGASLALMDAGVPIKAAVAGIAMGLVKEGDNFVVLSDILGDEDHLGDMDFKVAGSCEGISALQMDIKIEGITREIMQVALNQAKGARLHILSVMEQAITTPRDDISQFAPRIHTIKINPDKIKDVIGKGGSVIRALTEETGTTIEIEDDGTVKIAATDGEKAKHAISRIEEITAEIEVGRIYAGKVTRIVDFGAFVAIGGGKEGLVHISQIADKRVEKVADYLQVGQETSVKVLEIDRQGRVRLSIKEATAGTAVEEAPPAPQSAE</sequence>
<accession>P41121</accession>